<gene>
    <name type="primary">pskh1</name>
    <name type="ORF">si:ch211-201b11.4</name>
    <name type="ORF">zgc:113034</name>
</gene>
<feature type="chain" id="PRO_0000086169" description="Serine/threonine-protein kinase H1 homolog">
    <location>
        <begin position="1"/>
        <end position="422"/>
    </location>
</feature>
<feature type="domain" description="Protein kinase" evidence="2">
    <location>
        <begin position="96"/>
        <end position="353"/>
    </location>
</feature>
<feature type="region of interest" description="Disordered" evidence="4">
    <location>
        <begin position="35"/>
        <end position="80"/>
    </location>
</feature>
<feature type="region of interest" description="Disordered" evidence="4">
    <location>
        <begin position="376"/>
        <end position="422"/>
    </location>
</feature>
<feature type="compositionally biased region" description="Polar residues" evidence="4">
    <location>
        <begin position="46"/>
        <end position="62"/>
    </location>
</feature>
<feature type="compositionally biased region" description="Low complexity" evidence="4">
    <location>
        <begin position="384"/>
        <end position="396"/>
    </location>
</feature>
<feature type="compositionally biased region" description="Basic and acidic residues" evidence="4">
    <location>
        <begin position="405"/>
        <end position="414"/>
    </location>
</feature>
<feature type="active site" description="Proton acceptor" evidence="2 3">
    <location>
        <position position="216"/>
    </location>
</feature>
<feature type="binding site" evidence="2">
    <location>
        <begin position="102"/>
        <end position="110"/>
    </location>
    <ligand>
        <name>ATP</name>
        <dbReference type="ChEBI" id="CHEBI:30616"/>
    </ligand>
</feature>
<feature type="binding site" evidence="2">
    <location>
        <position position="125"/>
    </location>
    <ligand>
        <name>ATP</name>
        <dbReference type="ChEBI" id="CHEBI:30616"/>
    </ligand>
</feature>
<feature type="sequence conflict" description="In Ref. 2; AAH95860." evidence="5" ref="2">
    <original>T</original>
    <variation>A</variation>
    <location>
        <position position="390"/>
    </location>
</feature>
<evidence type="ECO:0000250" key="1">
    <source>
        <dbReference type="UniProtKB" id="P11801"/>
    </source>
</evidence>
<evidence type="ECO:0000255" key="2">
    <source>
        <dbReference type="PROSITE-ProRule" id="PRU00159"/>
    </source>
</evidence>
<evidence type="ECO:0000255" key="3">
    <source>
        <dbReference type="PROSITE-ProRule" id="PRU10027"/>
    </source>
</evidence>
<evidence type="ECO:0000256" key="4">
    <source>
        <dbReference type="SAM" id="MobiDB-lite"/>
    </source>
</evidence>
<evidence type="ECO:0000305" key="5"/>
<name>KPSH1_DANRE</name>
<dbReference type="EC" id="2.7.11.1" evidence="1"/>
<dbReference type="EMBL" id="BX548157">
    <property type="protein sequence ID" value="CAK04387.1"/>
    <property type="molecule type" value="Genomic_DNA"/>
</dbReference>
<dbReference type="EMBL" id="BC095860">
    <property type="protein sequence ID" value="AAH95860.1"/>
    <property type="molecule type" value="mRNA"/>
</dbReference>
<dbReference type="RefSeq" id="NP_001018546.1">
    <property type="nucleotide sequence ID" value="NM_001020710.1"/>
</dbReference>
<dbReference type="RefSeq" id="XP_068070872.1">
    <property type="nucleotide sequence ID" value="XM_068214771.1"/>
</dbReference>
<dbReference type="SMR" id="Q501V0"/>
<dbReference type="FunCoup" id="Q501V0">
    <property type="interactions" value="292"/>
</dbReference>
<dbReference type="STRING" id="7955.ENSDARP00000073709"/>
<dbReference type="PaxDb" id="7955-ENSDARP00000073709"/>
<dbReference type="Ensembl" id="ENSDART00000079253">
    <property type="protein sequence ID" value="ENSDARP00000073709"/>
    <property type="gene ID" value="ENSDARG00000056713"/>
</dbReference>
<dbReference type="Ensembl" id="ENSDART00000181910">
    <property type="protein sequence ID" value="ENSDARP00000146057"/>
    <property type="gene ID" value="ENSDARG00000056713"/>
</dbReference>
<dbReference type="Ensembl" id="ENSDART00000188087">
    <property type="protein sequence ID" value="ENSDARP00000154889"/>
    <property type="gene ID" value="ENSDARG00000115957"/>
</dbReference>
<dbReference type="Ensembl" id="ENSDART00000188809">
    <property type="protein sequence ID" value="ENSDARP00000154562"/>
    <property type="gene ID" value="ENSDARG00000056713"/>
</dbReference>
<dbReference type="GeneID" id="554840"/>
<dbReference type="KEGG" id="dre:554840"/>
<dbReference type="AGR" id="ZFIN:ZDB-GENE-050119-1"/>
<dbReference type="CTD" id="5681"/>
<dbReference type="ZFIN" id="ZDB-GENE-050119-1">
    <property type="gene designation" value="pskh1"/>
</dbReference>
<dbReference type="eggNOG" id="KOG0032">
    <property type="taxonomic scope" value="Eukaryota"/>
</dbReference>
<dbReference type="HOGENOM" id="CLU_000288_63_0_1"/>
<dbReference type="InParanoid" id="Q501V0"/>
<dbReference type="OMA" id="SYAGEHW"/>
<dbReference type="OrthoDB" id="40902at2759"/>
<dbReference type="PhylomeDB" id="Q501V0"/>
<dbReference type="TreeFam" id="TF314166"/>
<dbReference type="PRO" id="PR:Q501V0"/>
<dbReference type="Proteomes" id="UP000000437">
    <property type="component" value="Alternate scaffold 18"/>
</dbReference>
<dbReference type="Proteomes" id="UP000000437">
    <property type="component" value="Chromosome 18"/>
</dbReference>
<dbReference type="Bgee" id="ENSDARG00000056713">
    <property type="expression patterns" value="Expressed in swim bladder and 18 other cell types or tissues"/>
</dbReference>
<dbReference type="GO" id="GO:0005737">
    <property type="term" value="C:cytoplasm"/>
    <property type="evidence" value="ECO:0000318"/>
    <property type="project" value="GO_Central"/>
</dbReference>
<dbReference type="GO" id="GO:0005524">
    <property type="term" value="F:ATP binding"/>
    <property type="evidence" value="ECO:0007669"/>
    <property type="project" value="UniProtKB-KW"/>
</dbReference>
<dbReference type="GO" id="GO:0106310">
    <property type="term" value="F:protein serine kinase activity"/>
    <property type="evidence" value="ECO:0007669"/>
    <property type="project" value="RHEA"/>
</dbReference>
<dbReference type="GO" id="GO:0004674">
    <property type="term" value="F:protein serine/threonine kinase activity"/>
    <property type="evidence" value="ECO:0000318"/>
    <property type="project" value="GO_Central"/>
</dbReference>
<dbReference type="CDD" id="cd14087">
    <property type="entry name" value="STKc_PSKH1"/>
    <property type="match status" value="1"/>
</dbReference>
<dbReference type="FunFam" id="1.10.510.10:FF:000026">
    <property type="entry name" value="Calcium/calmodulin-dependent protein kinase type 1"/>
    <property type="match status" value="1"/>
</dbReference>
<dbReference type="Gene3D" id="1.10.510.10">
    <property type="entry name" value="Transferase(Phosphotransferase) domain 1"/>
    <property type="match status" value="1"/>
</dbReference>
<dbReference type="InterPro" id="IPR011009">
    <property type="entry name" value="Kinase-like_dom_sf"/>
</dbReference>
<dbReference type="InterPro" id="IPR000719">
    <property type="entry name" value="Prot_kinase_dom"/>
</dbReference>
<dbReference type="InterPro" id="IPR017441">
    <property type="entry name" value="Protein_kinase_ATP_BS"/>
</dbReference>
<dbReference type="InterPro" id="IPR008271">
    <property type="entry name" value="Ser/Thr_kinase_AS"/>
</dbReference>
<dbReference type="PANTHER" id="PTHR24347">
    <property type="entry name" value="SERINE/THREONINE-PROTEIN KINASE"/>
    <property type="match status" value="1"/>
</dbReference>
<dbReference type="Pfam" id="PF00069">
    <property type="entry name" value="Pkinase"/>
    <property type="match status" value="1"/>
</dbReference>
<dbReference type="SMART" id="SM00220">
    <property type="entry name" value="S_TKc"/>
    <property type="match status" value="1"/>
</dbReference>
<dbReference type="SUPFAM" id="SSF56112">
    <property type="entry name" value="Protein kinase-like (PK-like)"/>
    <property type="match status" value="1"/>
</dbReference>
<dbReference type="PROSITE" id="PS00107">
    <property type="entry name" value="PROTEIN_KINASE_ATP"/>
    <property type="match status" value="1"/>
</dbReference>
<dbReference type="PROSITE" id="PS50011">
    <property type="entry name" value="PROTEIN_KINASE_DOM"/>
    <property type="match status" value="1"/>
</dbReference>
<dbReference type="PROSITE" id="PS00108">
    <property type="entry name" value="PROTEIN_KINASE_ST"/>
    <property type="match status" value="1"/>
</dbReference>
<protein>
    <recommendedName>
        <fullName>Serine/threonine-protein kinase H1 homolog</fullName>
        <ecNumber evidence="1">2.7.11.1</ecNumber>
    </recommendedName>
</protein>
<keyword id="KW-0067">ATP-binding</keyword>
<keyword id="KW-0418">Kinase</keyword>
<keyword id="KW-0547">Nucleotide-binding</keyword>
<keyword id="KW-1185">Reference proteome</keyword>
<keyword id="KW-0723">Serine/threonine-protein kinase</keyword>
<keyword id="KW-0808">Transferase</keyword>
<proteinExistence type="evidence at transcript level"/>
<accession>Q501V0</accession>
<accession>Q1LWH5</accession>
<comment type="catalytic activity">
    <reaction>
        <text>L-seryl-[protein] + ATP = O-phospho-L-seryl-[protein] + ADP + H(+)</text>
        <dbReference type="Rhea" id="RHEA:17989"/>
        <dbReference type="Rhea" id="RHEA-COMP:9863"/>
        <dbReference type="Rhea" id="RHEA-COMP:11604"/>
        <dbReference type="ChEBI" id="CHEBI:15378"/>
        <dbReference type="ChEBI" id="CHEBI:29999"/>
        <dbReference type="ChEBI" id="CHEBI:30616"/>
        <dbReference type="ChEBI" id="CHEBI:83421"/>
        <dbReference type="ChEBI" id="CHEBI:456216"/>
        <dbReference type="EC" id="2.7.11.1"/>
    </reaction>
    <physiologicalReaction direction="left-to-right" evidence="1">
        <dbReference type="Rhea" id="RHEA:17990"/>
    </physiologicalReaction>
</comment>
<comment type="catalytic activity">
    <reaction>
        <text>L-threonyl-[protein] + ATP = O-phospho-L-threonyl-[protein] + ADP + H(+)</text>
        <dbReference type="Rhea" id="RHEA:46608"/>
        <dbReference type="Rhea" id="RHEA-COMP:11060"/>
        <dbReference type="Rhea" id="RHEA-COMP:11605"/>
        <dbReference type="ChEBI" id="CHEBI:15378"/>
        <dbReference type="ChEBI" id="CHEBI:30013"/>
        <dbReference type="ChEBI" id="CHEBI:30616"/>
        <dbReference type="ChEBI" id="CHEBI:61977"/>
        <dbReference type="ChEBI" id="CHEBI:456216"/>
        <dbReference type="EC" id="2.7.11.1"/>
    </reaction>
    <physiologicalReaction direction="left-to-right" evidence="1">
        <dbReference type="Rhea" id="RHEA:46609"/>
    </physiologicalReaction>
</comment>
<comment type="similarity">
    <text evidence="5">Belongs to the protein kinase superfamily. CAMK Ser/Thr protein kinase family.</text>
</comment>
<reference key="1">
    <citation type="journal article" date="2013" name="Nature">
        <title>The zebrafish reference genome sequence and its relationship to the human genome.</title>
        <authorList>
            <person name="Howe K."/>
            <person name="Clark M.D."/>
            <person name="Torroja C.F."/>
            <person name="Torrance J."/>
            <person name="Berthelot C."/>
            <person name="Muffato M."/>
            <person name="Collins J.E."/>
            <person name="Humphray S."/>
            <person name="McLaren K."/>
            <person name="Matthews L."/>
            <person name="McLaren S."/>
            <person name="Sealy I."/>
            <person name="Caccamo M."/>
            <person name="Churcher C."/>
            <person name="Scott C."/>
            <person name="Barrett J.C."/>
            <person name="Koch R."/>
            <person name="Rauch G.J."/>
            <person name="White S."/>
            <person name="Chow W."/>
            <person name="Kilian B."/>
            <person name="Quintais L.T."/>
            <person name="Guerra-Assuncao J.A."/>
            <person name="Zhou Y."/>
            <person name="Gu Y."/>
            <person name="Yen J."/>
            <person name="Vogel J.H."/>
            <person name="Eyre T."/>
            <person name="Redmond S."/>
            <person name="Banerjee R."/>
            <person name="Chi J."/>
            <person name="Fu B."/>
            <person name="Langley E."/>
            <person name="Maguire S.F."/>
            <person name="Laird G.K."/>
            <person name="Lloyd D."/>
            <person name="Kenyon E."/>
            <person name="Donaldson S."/>
            <person name="Sehra H."/>
            <person name="Almeida-King J."/>
            <person name="Loveland J."/>
            <person name="Trevanion S."/>
            <person name="Jones M."/>
            <person name="Quail M."/>
            <person name="Willey D."/>
            <person name="Hunt A."/>
            <person name="Burton J."/>
            <person name="Sims S."/>
            <person name="McLay K."/>
            <person name="Plumb B."/>
            <person name="Davis J."/>
            <person name="Clee C."/>
            <person name="Oliver K."/>
            <person name="Clark R."/>
            <person name="Riddle C."/>
            <person name="Elliot D."/>
            <person name="Threadgold G."/>
            <person name="Harden G."/>
            <person name="Ware D."/>
            <person name="Begum S."/>
            <person name="Mortimore B."/>
            <person name="Kerry G."/>
            <person name="Heath P."/>
            <person name="Phillimore B."/>
            <person name="Tracey A."/>
            <person name="Corby N."/>
            <person name="Dunn M."/>
            <person name="Johnson C."/>
            <person name="Wood J."/>
            <person name="Clark S."/>
            <person name="Pelan S."/>
            <person name="Griffiths G."/>
            <person name="Smith M."/>
            <person name="Glithero R."/>
            <person name="Howden P."/>
            <person name="Barker N."/>
            <person name="Lloyd C."/>
            <person name="Stevens C."/>
            <person name="Harley J."/>
            <person name="Holt K."/>
            <person name="Panagiotidis G."/>
            <person name="Lovell J."/>
            <person name="Beasley H."/>
            <person name="Henderson C."/>
            <person name="Gordon D."/>
            <person name="Auger K."/>
            <person name="Wright D."/>
            <person name="Collins J."/>
            <person name="Raisen C."/>
            <person name="Dyer L."/>
            <person name="Leung K."/>
            <person name="Robertson L."/>
            <person name="Ambridge K."/>
            <person name="Leongamornlert D."/>
            <person name="McGuire S."/>
            <person name="Gilderthorp R."/>
            <person name="Griffiths C."/>
            <person name="Manthravadi D."/>
            <person name="Nichol S."/>
            <person name="Barker G."/>
            <person name="Whitehead S."/>
            <person name="Kay M."/>
            <person name="Brown J."/>
            <person name="Murnane C."/>
            <person name="Gray E."/>
            <person name="Humphries M."/>
            <person name="Sycamore N."/>
            <person name="Barker D."/>
            <person name="Saunders D."/>
            <person name="Wallis J."/>
            <person name="Babbage A."/>
            <person name="Hammond S."/>
            <person name="Mashreghi-Mohammadi M."/>
            <person name="Barr L."/>
            <person name="Martin S."/>
            <person name="Wray P."/>
            <person name="Ellington A."/>
            <person name="Matthews N."/>
            <person name="Ellwood M."/>
            <person name="Woodmansey R."/>
            <person name="Clark G."/>
            <person name="Cooper J."/>
            <person name="Tromans A."/>
            <person name="Grafham D."/>
            <person name="Skuce C."/>
            <person name="Pandian R."/>
            <person name="Andrews R."/>
            <person name="Harrison E."/>
            <person name="Kimberley A."/>
            <person name="Garnett J."/>
            <person name="Fosker N."/>
            <person name="Hall R."/>
            <person name="Garner P."/>
            <person name="Kelly D."/>
            <person name="Bird C."/>
            <person name="Palmer S."/>
            <person name="Gehring I."/>
            <person name="Berger A."/>
            <person name="Dooley C.M."/>
            <person name="Ersan-Urun Z."/>
            <person name="Eser C."/>
            <person name="Geiger H."/>
            <person name="Geisler M."/>
            <person name="Karotki L."/>
            <person name="Kirn A."/>
            <person name="Konantz J."/>
            <person name="Konantz M."/>
            <person name="Oberlander M."/>
            <person name="Rudolph-Geiger S."/>
            <person name="Teucke M."/>
            <person name="Lanz C."/>
            <person name="Raddatz G."/>
            <person name="Osoegawa K."/>
            <person name="Zhu B."/>
            <person name="Rapp A."/>
            <person name="Widaa S."/>
            <person name="Langford C."/>
            <person name="Yang F."/>
            <person name="Schuster S.C."/>
            <person name="Carter N.P."/>
            <person name="Harrow J."/>
            <person name="Ning Z."/>
            <person name="Herrero J."/>
            <person name="Searle S.M."/>
            <person name="Enright A."/>
            <person name="Geisler R."/>
            <person name="Plasterk R.H."/>
            <person name="Lee C."/>
            <person name="Westerfield M."/>
            <person name="de Jong P.J."/>
            <person name="Zon L.I."/>
            <person name="Postlethwait J.H."/>
            <person name="Nusslein-Volhard C."/>
            <person name="Hubbard T.J."/>
            <person name="Roest Crollius H."/>
            <person name="Rogers J."/>
            <person name="Stemple D.L."/>
        </authorList>
    </citation>
    <scope>NUCLEOTIDE SEQUENCE [LARGE SCALE GENOMIC DNA]</scope>
    <source>
        <strain>Tuebingen</strain>
    </source>
</reference>
<reference key="2">
    <citation type="submission" date="2005-05" db="EMBL/GenBank/DDBJ databases">
        <authorList>
            <consortium name="NIH - Zebrafish Gene Collection (ZGC) project"/>
        </authorList>
    </citation>
    <scope>NUCLEOTIDE SEQUENCE [LARGE SCALE MRNA]</scope>
    <source>
        <tissue>Embryo</tissue>
    </source>
</reference>
<sequence length="422" mass="47933">MGCRTSKVLPEPPGDVQLDLVKKVEPHQTDVYKNFIKYDGGGEKTGSPSPQGQSQAVAKVSQSPPPANDQPEPADSHRKKVAKYRAKFDPRVTAKYDIKALIGRGSFSRVVRVEHRSTRQPYAIKMIETRYREGREVCESELCVLRRVRHTNIIQLMEVFETAERVYMVMELATGGELFDRIITRGSFTERDATRVLQMVLDGVKYLHTLGITHRDLKPENLLYYHPGADSKIMITDFGLASTRKKGDECLMKTTCGTPEYIAPEILVRKPYTNAVDMWALGVISYILLSGTMPFEDDNRMRLYRQILKGKYSFSGEPWPSVSNLAKDFIDRVLTVDPNERLSAGQALKHPWIVSMAASSSMKNLHRSISQNLLKRASSRCHSTKSSQSTRSSRSTKSSKARRLREKELRELNRRYQQQCNG</sequence>
<organism>
    <name type="scientific">Danio rerio</name>
    <name type="common">Zebrafish</name>
    <name type="synonym">Brachydanio rerio</name>
    <dbReference type="NCBI Taxonomy" id="7955"/>
    <lineage>
        <taxon>Eukaryota</taxon>
        <taxon>Metazoa</taxon>
        <taxon>Chordata</taxon>
        <taxon>Craniata</taxon>
        <taxon>Vertebrata</taxon>
        <taxon>Euteleostomi</taxon>
        <taxon>Actinopterygii</taxon>
        <taxon>Neopterygii</taxon>
        <taxon>Teleostei</taxon>
        <taxon>Ostariophysi</taxon>
        <taxon>Cypriniformes</taxon>
        <taxon>Danionidae</taxon>
        <taxon>Danioninae</taxon>
        <taxon>Danio</taxon>
    </lineage>
</organism>